<organism>
    <name type="scientific">Blochmanniella pennsylvanica (strain BPEN)</name>
    <dbReference type="NCBI Taxonomy" id="291272"/>
    <lineage>
        <taxon>Bacteria</taxon>
        <taxon>Pseudomonadati</taxon>
        <taxon>Pseudomonadota</taxon>
        <taxon>Gammaproteobacteria</taxon>
        <taxon>Enterobacterales</taxon>
        <taxon>Enterobacteriaceae</taxon>
        <taxon>ant endosymbionts</taxon>
        <taxon>Candidatus Blochmanniella</taxon>
    </lineage>
</organism>
<evidence type="ECO:0000255" key="1">
    <source>
        <dbReference type="HAMAP-Rule" id="MF_00071"/>
    </source>
</evidence>
<accession>Q492C9</accession>
<comment type="function">
    <text evidence="1">Required for accurate and efficient protein synthesis under certain stress conditions. May act as a fidelity factor of the translation reaction, by catalyzing a one-codon backward translocation of tRNAs on improperly translocated ribosomes. Back-translocation proceeds from a post-translocation (POST) complex to a pre-translocation (PRE) complex, thus giving elongation factor G a second chance to translocate the tRNAs correctly. Binds to ribosomes in a GTP-dependent manner.</text>
</comment>
<comment type="catalytic activity">
    <reaction evidence="1">
        <text>GTP + H2O = GDP + phosphate + H(+)</text>
        <dbReference type="Rhea" id="RHEA:19669"/>
        <dbReference type="ChEBI" id="CHEBI:15377"/>
        <dbReference type="ChEBI" id="CHEBI:15378"/>
        <dbReference type="ChEBI" id="CHEBI:37565"/>
        <dbReference type="ChEBI" id="CHEBI:43474"/>
        <dbReference type="ChEBI" id="CHEBI:58189"/>
        <dbReference type="EC" id="3.6.5.n1"/>
    </reaction>
</comment>
<comment type="subcellular location">
    <subcellularLocation>
        <location evidence="1">Cell inner membrane</location>
        <topology evidence="1">Peripheral membrane protein</topology>
        <orientation evidence="1">Cytoplasmic side</orientation>
    </subcellularLocation>
</comment>
<comment type="similarity">
    <text evidence="1">Belongs to the TRAFAC class translation factor GTPase superfamily. Classic translation factor GTPase family. LepA subfamily.</text>
</comment>
<gene>
    <name evidence="1" type="primary">lepA</name>
    <name type="ordered locus">BPEN_562</name>
</gene>
<dbReference type="EC" id="3.6.5.n1" evidence="1"/>
<dbReference type="EMBL" id="CP000016">
    <property type="protein sequence ID" value="AAZ41172.1"/>
    <property type="molecule type" value="Genomic_DNA"/>
</dbReference>
<dbReference type="RefSeq" id="WP_011283083.1">
    <property type="nucleotide sequence ID" value="NC_007292.1"/>
</dbReference>
<dbReference type="SMR" id="Q492C9"/>
<dbReference type="STRING" id="291272.BPEN_562"/>
<dbReference type="KEGG" id="bpn:BPEN_562"/>
<dbReference type="eggNOG" id="COG0481">
    <property type="taxonomic scope" value="Bacteria"/>
</dbReference>
<dbReference type="HOGENOM" id="CLU_009995_3_3_6"/>
<dbReference type="OrthoDB" id="9804431at2"/>
<dbReference type="Proteomes" id="UP000007794">
    <property type="component" value="Chromosome"/>
</dbReference>
<dbReference type="GO" id="GO:0005886">
    <property type="term" value="C:plasma membrane"/>
    <property type="evidence" value="ECO:0007669"/>
    <property type="project" value="UniProtKB-SubCell"/>
</dbReference>
<dbReference type="GO" id="GO:0005525">
    <property type="term" value="F:GTP binding"/>
    <property type="evidence" value="ECO:0007669"/>
    <property type="project" value="UniProtKB-UniRule"/>
</dbReference>
<dbReference type="GO" id="GO:0003924">
    <property type="term" value="F:GTPase activity"/>
    <property type="evidence" value="ECO:0007669"/>
    <property type="project" value="UniProtKB-UniRule"/>
</dbReference>
<dbReference type="GO" id="GO:0097216">
    <property type="term" value="F:guanosine tetraphosphate binding"/>
    <property type="evidence" value="ECO:0007669"/>
    <property type="project" value="UniProtKB-ARBA"/>
</dbReference>
<dbReference type="GO" id="GO:0043022">
    <property type="term" value="F:ribosome binding"/>
    <property type="evidence" value="ECO:0007669"/>
    <property type="project" value="UniProtKB-UniRule"/>
</dbReference>
<dbReference type="GO" id="GO:0003746">
    <property type="term" value="F:translation elongation factor activity"/>
    <property type="evidence" value="ECO:0007669"/>
    <property type="project" value="UniProtKB-UniRule"/>
</dbReference>
<dbReference type="GO" id="GO:0045727">
    <property type="term" value="P:positive regulation of translation"/>
    <property type="evidence" value="ECO:0007669"/>
    <property type="project" value="UniProtKB-UniRule"/>
</dbReference>
<dbReference type="CDD" id="cd03699">
    <property type="entry name" value="EF4_II"/>
    <property type="match status" value="1"/>
</dbReference>
<dbReference type="CDD" id="cd01890">
    <property type="entry name" value="LepA"/>
    <property type="match status" value="1"/>
</dbReference>
<dbReference type="CDD" id="cd03709">
    <property type="entry name" value="lepA_C"/>
    <property type="match status" value="1"/>
</dbReference>
<dbReference type="FunFam" id="3.40.50.300:FF:000078">
    <property type="entry name" value="Elongation factor 4"/>
    <property type="match status" value="1"/>
</dbReference>
<dbReference type="FunFam" id="2.40.30.10:FF:000015">
    <property type="entry name" value="Translation factor GUF1, mitochondrial"/>
    <property type="match status" value="1"/>
</dbReference>
<dbReference type="FunFam" id="3.30.70.240:FF:000007">
    <property type="entry name" value="Translation factor GUF1, mitochondrial"/>
    <property type="match status" value="1"/>
</dbReference>
<dbReference type="FunFam" id="3.30.70.2570:FF:000001">
    <property type="entry name" value="Translation factor GUF1, mitochondrial"/>
    <property type="match status" value="1"/>
</dbReference>
<dbReference type="FunFam" id="3.30.70.870:FF:000004">
    <property type="entry name" value="Translation factor GUF1, mitochondrial"/>
    <property type="match status" value="1"/>
</dbReference>
<dbReference type="Gene3D" id="3.30.70.240">
    <property type="match status" value="1"/>
</dbReference>
<dbReference type="Gene3D" id="3.30.70.2570">
    <property type="entry name" value="Elongation factor 4, C-terminal domain"/>
    <property type="match status" value="1"/>
</dbReference>
<dbReference type="Gene3D" id="3.30.70.870">
    <property type="entry name" value="Elongation Factor G (Translational Gtpase), domain 3"/>
    <property type="match status" value="1"/>
</dbReference>
<dbReference type="Gene3D" id="3.40.50.300">
    <property type="entry name" value="P-loop containing nucleotide triphosphate hydrolases"/>
    <property type="match status" value="1"/>
</dbReference>
<dbReference type="Gene3D" id="2.40.30.10">
    <property type="entry name" value="Translation factors"/>
    <property type="match status" value="1"/>
</dbReference>
<dbReference type="HAMAP" id="MF_00071">
    <property type="entry name" value="LepA"/>
    <property type="match status" value="1"/>
</dbReference>
<dbReference type="InterPro" id="IPR006297">
    <property type="entry name" value="EF-4"/>
</dbReference>
<dbReference type="InterPro" id="IPR035647">
    <property type="entry name" value="EFG_III/V"/>
</dbReference>
<dbReference type="InterPro" id="IPR000640">
    <property type="entry name" value="EFG_V-like"/>
</dbReference>
<dbReference type="InterPro" id="IPR031157">
    <property type="entry name" value="G_TR_CS"/>
</dbReference>
<dbReference type="InterPro" id="IPR038363">
    <property type="entry name" value="LepA_C_sf"/>
</dbReference>
<dbReference type="InterPro" id="IPR013842">
    <property type="entry name" value="LepA_CTD"/>
</dbReference>
<dbReference type="InterPro" id="IPR035654">
    <property type="entry name" value="LepA_IV"/>
</dbReference>
<dbReference type="InterPro" id="IPR027417">
    <property type="entry name" value="P-loop_NTPase"/>
</dbReference>
<dbReference type="InterPro" id="IPR005225">
    <property type="entry name" value="Small_GTP-bd"/>
</dbReference>
<dbReference type="InterPro" id="IPR000795">
    <property type="entry name" value="T_Tr_GTP-bd_dom"/>
</dbReference>
<dbReference type="InterPro" id="IPR009000">
    <property type="entry name" value="Transl_B-barrel_sf"/>
</dbReference>
<dbReference type="NCBIfam" id="TIGR01393">
    <property type="entry name" value="lepA"/>
    <property type="match status" value="1"/>
</dbReference>
<dbReference type="NCBIfam" id="TIGR00231">
    <property type="entry name" value="small_GTP"/>
    <property type="match status" value="1"/>
</dbReference>
<dbReference type="PANTHER" id="PTHR43512:SF4">
    <property type="entry name" value="TRANSLATION FACTOR GUF1 HOMOLOG, CHLOROPLASTIC"/>
    <property type="match status" value="1"/>
</dbReference>
<dbReference type="PANTHER" id="PTHR43512">
    <property type="entry name" value="TRANSLATION FACTOR GUF1-RELATED"/>
    <property type="match status" value="1"/>
</dbReference>
<dbReference type="Pfam" id="PF00679">
    <property type="entry name" value="EFG_C"/>
    <property type="match status" value="1"/>
</dbReference>
<dbReference type="Pfam" id="PF00009">
    <property type="entry name" value="GTP_EFTU"/>
    <property type="match status" value="1"/>
</dbReference>
<dbReference type="Pfam" id="PF06421">
    <property type="entry name" value="LepA_C"/>
    <property type="match status" value="1"/>
</dbReference>
<dbReference type="PRINTS" id="PR00315">
    <property type="entry name" value="ELONGATNFCT"/>
</dbReference>
<dbReference type="SUPFAM" id="SSF54980">
    <property type="entry name" value="EF-G C-terminal domain-like"/>
    <property type="match status" value="2"/>
</dbReference>
<dbReference type="SUPFAM" id="SSF52540">
    <property type="entry name" value="P-loop containing nucleoside triphosphate hydrolases"/>
    <property type="match status" value="1"/>
</dbReference>
<dbReference type="SUPFAM" id="SSF50447">
    <property type="entry name" value="Translation proteins"/>
    <property type="match status" value="1"/>
</dbReference>
<dbReference type="PROSITE" id="PS00301">
    <property type="entry name" value="G_TR_1"/>
    <property type="match status" value="1"/>
</dbReference>
<dbReference type="PROSITE" id="PS51722">
    <property type="entry name" value="G_TR_2"/>
    <property type="match status" value="1"/>
</dbReference>
<proteinExistence type="inferred from homology"/>
<protein>
    <recommendedName>
        <fullName evidence="1">Elongation factor 4</fullName>
        <shortName evidence="1">EF-4</shortName>
        <ecNumber evidence="1">3.6.5.n1</ecNumber>
    </recommendedName>
    <alternativeName>
        <fullName evidence="1">Ribosomal back-translocase LepA</fullName>
    </alternativeName>
</protein>
<name>LEPA_BLOPB</name>
<keyword id="KW-0997">Cell inner membrane</keyword>
<keyword id="KW-1003">Cell membrane</keyword>
<keyword id="KW-0342">GTP-binding</keyword>
<keyword id="KW-0378">Hydrolase</keyword>
<keyword id="KW-0472">Membrane</keyword>
<keyword id="KW-0547">Nucleotide-binding</keyword>
<keyword id="KW-0648">Protein biosynthesis</keyword>
<keyword id="KW-1185">Reference proteome</keyword>
<reference key="1">
    <citation type="journal article" date="2005" name="Genome Res.">
        <title>Genome sequence of Blochmannia pennsylvanicus indicates parallel evolutionary trends among bacterial mutualists of insects.</title>
        <authorList>
            <person name="Degnan P.H."/>
            <person name="Lazarus A.B."/>
            <person name="Wernegreen J.J."/>
        </authorList>
    </citation>
    <scope>NUCLEOTIDE SEQUENCE [LARGE SCALE GENOMIC DNA]</scope>
    <source>
        <strain>BPEN</strain>
    </source>
</reference>
<feature type="chain" id="PRO_0000224745" description="Elongation factor 4">
    <location>
        <begin position="1"/>
        <end position="600"/>
    </location>
</feature>
<feature type="domain" description="tr-type G">
    <location>
        <begin position="3"/>
        <end position="185"/>
    </location>
</feature>
<feature type="binding site" evidence="1">
    <location>
        <begin position="15"/>
        <end position="20"/>
    </location>
    <ligand>
        <name>GTP</name>
        <dbReference type="ChEBI" id="CHEBI:37565"/>
    </ligand>
</feature>
<feature type="binding site" evidence="1">
    <location>
        <begin position="132"/>
        <end position="135"/>
    </location>
    <ligand>
        <name>GTP</name>
        <dbReference type="ChEBI" id="CHEBI:37565"/>
    </ligand>
</feature>
<sequence>MIKYIRNFSIIAHIDHGKSTLSDRLIQTCGGLNEREMTSQVLDSMELERERGITIKSQNVTLNYKSKSGQPYQLNLIDTPGHVDFSYEVSRSLAACEGALLIVDVTQGVEAQTVANYRIAKEMNLKIIVALNKIDLSTADPNRASQEIKNIIGIDVNNAIQCSAKTGYGIPELLECLIHDIPHPQGDPCAPLQALIIDSWFNQYLGVVSLICIKNGKLYKGDVLKSMNTGQKYTVDQIGIFTPKQVKREILDCGEVGWLVCANKNIIKTPVGDTFTLSTHPAKKACHGFKKLQPYVYAGLFPIGSKNQKIFRDALYKLSLNDSSLFYEPERSEFLGLGFRCGFLGLLHLDIIQERLRREYSLDLLVTAPMVVYEILTIDNRIIYVDSPSKLLSLTKIKEIREPVVLCNILLPKKYLGEIISLCIKKRGTQIDIIYHSTQVTLTYELPMSEIILNFFDQIKSASHGYASFEYKFSRFQRSNIVCIEILINKKRIDALTVITHQEQSIYHGRLLVNKLQKLIPRQQFDIVIQATIGKRIISRGIVKQLRKNVLAKCHGGDITRKKKLLYNQKEGKKRMKQIGNVNLPHTVFLAVFDVNNNKK</sequence>